<feature type="chain" id="PRO_0000256803" description="UPF0391 membrane protein XCV1406">
    <location>
        <begin position="1"/>
        <end position="57"/>
    </location>
</feature>
<feature type="transmembrane region" description="Helical" evidence="1">
    <location>
        <begin position="4"/>
        <end position="24"/>
    </location>
</feature>
<feature type="transmembrane region" description="Helical" evidence="1">
    <location>
        <begin position="33"/>
        <end position="53"/>
    </location>
</feature>
<keyword id="KW-1003">Cell membrane</keyword>
<keyword id="KW-0472">Membrane</keyword>
<keyword id="KW-0812">Transmembrane</keyword>
<keyword id="KW-1133">Transmembrane helix</keyword>
<comment type="subcellular location">
    <subcellularLocation>
        <location evidence="1">Cell membrane</location>
        <topology evidence="1">Multi-pass membrane protein</topology>
    </subcellularLocation>
</comment>
<comment type="similarity">
    <text evidence="1">Belongs to the UPF0391 family.</text>
</comment>
<proteinExistence type="inferred from homology"/>
<organism>
    <name type="scientific">Xanthomonas euvesicatoria pv. vesicatoria (strain 85-10)</name>
    <name type="common">Xanthomonas campestris pv. vesicatoria</name>
    <dbReference type="NCBI Taxonomy" id="316273"/>
    <lineage>
        <taxon>Bacteria</taxon>
        <taxon>Pseudomonadati</taxon>
        <taxon>Pseudomonadota</taxon>
        <taxon>Gammaproteobacteria</taxon>
        <taxon>Lysobacterales</taxon>
        <taxon>Lysobacteraceae</taxon>
        <taxon>Xanthomonas</taxon>
    </lineage>
</organism>
<accession>Q3BVS6</accession>
<gene>
    <name type="ordered locus">XCV1406</name>
</gene>
<sequence length="57" mass="5882">MIKWAIIFAIIGLIAGALGFGGMAGAAMGIAKFLFWAGIIIAIVLFVLGMTIAKKVT</sequence>
<protein>
    <recommendedName>
        <fullName evidence="1">UPF0391 membrane protein XCV1406</fullName>
    </recommendedName>
</protein>
<reference key="1">
    <citation type="journal article" date="2005" name="J. Bacteriol.">
        <title>Insights into genome plasticity and pathogenicity of the plant pathogenic Bacterium Xanthomonas campestris pv. vesicatoria revealed by the complete genome sequence.</title>
        <authorList>
            <person name="Thieme F."/>
            <person name="Koebnik R."/>
            <person name="Bekel T."/>
            <person name="Berger C."/>
            <person name="Boch J."/>
            <person name="Buettner D."/>
            <person name="Caldana C."/>
            <person name="Gaigalat L."/>
            <person name="Goesmann A."/>
            <person name="Kay S."/>
            <person name="Kirchner O."/>
            <person name="Lanz C."/>
            <person name="Linke B."/>
            <person name="McHardy A.C."/>
            <person name="Meyer F."/>
            <person name="Mittenhuber G."/>
            <person name="Nies D.H."/>
            <person name="Niesbach-Kloesgen U."/>
            <person name="Patschkowski T."/>
            <person name="Rueckert C."/>
            <person name="Rupp O."/>
            <person name="Schneiker S."/>
            <person name="Schuster S.C."/>
            <person name="Vorhoelter F.J."/>
            <person name="Weber E."/>
            <person name="Puehler A."/>
            <person name="Bonas U."/>
            <person name="Bartels D."/>
            <person name="Kaiser O."/>
        </authorList>
    </citation>
    <scope>NUCLEOTIDE SEQUENCE [LARGE SCALE GENOMIC DNA]</scope>
    <source>
        <strain>85-10</strain>
    </source>
</reference>
<evidence type="ECO:0000255" key="1">
    <source>
        <dbReference type="HAMAP-Rule" id="MF_01361"/>
    </source>
</evidence>
<name>Y1406_XANE5</name>
<dbReference type="EMBL" id="AM039952">
    <property type="protein sequence ID" value="CAJ23037.1"/>
    <property type="molecule type" value="Genomic_DNA"/>
</dbReference>
<dbReference type="RefSeq" id="WP_003489471.1">
    <property type="nucleotide sequence ID" value="NZ_CP017190.1"/>
</dbReference>
<dbReference type="STRING" id="456327.BJD11_15620"/>
<dbReference type="KEGG" id="xcv:XCV1406"/>
<dbReference type="eggNOG" id="COG5487">
    <property type="taxonomic scope" value="Bacteria"/>
</dbReference>
<dbReference type="HOGENOM" id="CLU_187346_1_1_6"/>
<dbReference type="Proteomes" id="UP000007069">
    <property type="component" value="Chromosome"/>
</dbReference>
<dbReference type="GO" id="GO:0005886">
    <property type="term" value="C:plasma membrane"/>
    <property type="evidence" value="ECO:0007669"/>
    <property type="project" value="UniProtKB-SubCell"/>
</dbReference>
<dbReference type="HAMAP" id="MF_01361">
    <property type="entry name" value="UPF0391"/>
    <property type="match status" value="1"/>
</dbReference>
<dbReference type="InterPro" id="IPR009760">
    <property type="entry name" value="DUF1328"/>
</dbReference>
<dbReference type="NCBIfam" id="NF010231">
    <property type="entry name" value="PRK13682.2-1"/>
    <property type="match status" value="1"/>
</dbReference>
<dbReference type="Pfam" id="PF07043">
    <property type="entry name" value="DUF1328"/>
    <property type="match status" value="1"/>
</dbReference>
<dbReference type="PIRSF" id="PIRSF036466">
    <property type="entry name" value="UCP036466"/>
    <property type="match status" value="1"/>
</dbReference>